<organism>
    <name type="scientific">Shewanella halifaxensis (strain HAW-EB4)</name>
    <dbReference type="NCBI Taxonomy" id="458817"/>
    <lineage>
        <taxon>Bacteria</taxon>
        <taxon>Pseudomonadati</taxon>
        <taxon>Pseudomonadota</taxon>
        <taxon>Gammaproteobacteria</taxon>
        <taxon>Alteromonadales</taxon>
        <taxon>Shewanellaceae</taxon>
        <taxon>Shewanella</taxon>
    </lineage>
</organism>
<dbReference type="EMBL" id="CP000931">
    <property type="protein sequence ID" value="ABZ78669.1"/>
    <property type="molecule type" value="Genomic_DNA"/>
</dbReference>
<dbReference type="RefSeq" id="WP_012144645.1">
    <property type="nucleotide sequence ID" value="NC_010334.1"/>
</dbReference>
<dbReference type="SMR" id="B0TM07"/>
<dbReference type="STRING" id="458817.Shal_4129"/>
<dbReference type="KEGG" id="shl:Shal_4129"/>
<dbReference type="eggNOG" id="COG0091">
    <property type="taxonomic scope" value="Bacteria"/>
</dbReference>
<dbReference type="HOGENOM" id="CLU_083987_3_3_6"/>
<dbReference type="OrthoDB" id="9805969at2"/>
<dbReference type="Proteomes" id="UP000001317">
    <property type="component" value="Chromosome"/>
</dbReference>
<dbReference type="GO" id="GO:0022625">
    <property type="term" value="C:cytosolic large ribosomal subunit"/>
    <property type="evidence" value="ECO:0007669"/>
    <property type="project" value="TreeGrafter"/>
</dbReference>
<dbReference type="GO" id="GO:0019843">
    <property type="term" value="F:rRNA binding"/>
    <property type="evidence" value="ECO:0007669"/>
    <property type="project" value="UniProtKB-UniRule"/>
</dbReference>
<dbReference type="GO" id="GO:0003735">
    <property type="term" value="F:structural constituent of ribosome"/>
    <property type="evidence" value="ECO:0007669"/>
    <property type="project" value="InterPro"/>
</dbReference>
<dbReference type="GO" id="GO:0006412">
    <property type="term" value="P:translation"/>
    <property type="evidence" value="ECO:0007669"/>
    <property type="project" value="UniProtKB-UniRule"/>
</dbReference>
<dbReference type="CDD" id="cd00336">
    <property type="entry name" value="Ribosomal_L22"/>
    <property type="match status" value="1"/>
</dbReference>
<dbReference type="FunFam" id="3.90.470.10:FF:000001">
    <property type="entry name" value="50S ribosomal protein L22"/>
    <property type="match status" value="1"/>
</dbReference>
<dbReference type="Gene3D" id="3.90.470.10">
    <property type="entry name" value="Ribosomal protein L22/L17"/>
    <property type="match status" value="1"/>
</dbReference>
<dbReference type="HAMAP" id="MF_01331_B">
    <property type="entry name" value="Ribosomal_uL22_B"/>
    <property type="match status" value="1"/>
</dbReference>
<dbReference type="InterPro" id="IPR001063">
    <property type="entry name" value="Ribosomal_uL22"/>
</dbReference>
<dbReference type="InterPro" id="IPR005727">
    <property type="entry name" value="Ribosomal_uL22_bac/chlpt-type"/>
</dbReference>
<dbReference type="InterPro" id="IPR047867">
    <property type="entry name" value="Ribosomal_uL22_bac/org-type"/>
</dbReference>
<dbReference type="InterPro" id="IPR018260">
    <property type="entry name" value="Ribosomal_uL22_CS"/>
</dbReference>
<dbReference type="InterPro" id="IPR036394">
    <property type="entry name" value="Ribosomal_uL22_sf"/>
</dbReference>
<dbReference type="NCBIfam" id="TIGR01044">
    <property type="entry name" value="rplV_bact"/>
    <property type="match status" value="1"/>
</dbReference>
<dbReference type="PANTHER" id="PTHR13501">
    <property type="entry name" value="CHLOROPLAST 50S RIBOSOMAL PROTEIN L22-RELATED"/>
    <property type="match status" value="1"/>
</dbReference>
<dbReference type="PANTHER" id="PTHR13501:SF8">
    <property type="entry name" value="LARGE RIBOSOMAL SUBUNIT PROTEIN UL22M"/>
    <property type="match status" value="1"/>
</dbReference>
<dbReference type="Pfam" id="PF00237">
    <property type="entry name" value="Ribosomal_L22"/>
    <property type="match status" value="1"/>
</dbReference>
<dbReference type="SUPFAM" id="SSF54843">
    <property type="entry name" value="Ribosomal protein L22"/>
    <property type="match status" value="1"/>
</dbReference>
<dbReference type="PROSITE" id="PS00464">
    <property type="entry name" value="RIBOSOMAL_L22"/>
    <property type="match status" value="1"/>
</dbReference>
<name>RL22_SHEHH</name>
<evidence type="ECO:0000255" key="1">
    <source>
        <dbReference type="HAMAP-Rule" id="MF_01331"/>
    </source>
</evidence>
<evidence type="ECO:0000305" key="2"/>
<gene>
    <name evidence="1" type="primary">rplV</name>
    <name type="ordered locus">Shal_4129</name>
</gene>
<sequence length="110" mass="12151">MEVLAKHRFARTSPQKCRLVADQIRGLPVAKALEILTFSPKKAAVLVKKVLDSAIANAEHNEGADIDELRVGAIMIDEGPTMKRIMPRAKGRADRIIKRTSHITVVVSDR</sequence>
<protein>
    <recommendedName>
        <fullName evidence="1">Large ribosomal subunit protein uL22</fullName>
    </recommendedName>
    <alternativeName>
        <fullName evidence="2">50S ribosomal protein L22</fullName>
    </alternativeName>
</protein>
<accession>B0TM07</accession>
<feature type="chain" id="PRO_1000086570" description="Large ribosomal subunit protein uL22">
    <location>
        <begin position="1"/>
        <end position="110"/>
    </location>
</feature>
<reference key="1">
    <citation type="submission" date="2008-01" db="EMBL/GenBank/DDBJ databases">
        <title>Complete sequence of Shewanella halifaxensis HAW-EB4.</title>
        <authorList>
            <consortium name="US DOE Joint Genome Institute"/>
            <person name="Copeland A."/>
            <person name="Lucas S."/>
            <person name="Lapidus A."/>
            <person name="Glavina del Rio T."/>
            <person name="Dalin E."/>
            <person name="Tice H."/>
            <person name="Bruce D."/>
            <person name="Goodwin L."/>
            <person name="Pitluck S."/>
            <person name="Sims D."/>
            <person name="Brettin T."/>
            <person name="Detter J.C."/>
            <person name="Han C."/>
            <person name="Kuske C.R."/>
            <person name="Schmutz J."/>
            <person name="Larimer F."/>
            <person name="Land M."/>
            <person name="Hauser L."/>
            <person name="Kyrpides N."/>
            <person name="Kim E."/>
            <person name="Zhao J.-S."/>
            <person name="Richardson P."/>
        </authorList>
    </citation>
    <scope>NUCLEOTIDE SEQUENCE [LARGE SCALE GENOMIC DNA]</scope>
    <source>
        <strain>HAW-EB4</strain>
    </source>
</reference>
<comment type="function">
    <text evidence="1">This protein binds specifically to 23S rRNA; its binding is stimulated by other ribosomal proteins, e.g. L4, L17, and L20. It is important during the early stages of 50S assembly. It makes multiple contacts with different domains of the 23S rRNA in the assembled 50S subunit and ribosome (By similarity).</text>
</comment>
<comment type="function">
    <text evidence="1">The globular domain of the protein is located near the polypeptide exit tunnel on the outside of the subunit, while an extended beta-hairpin is found that lines the wall of the exit tunnel in the center of the 70S ribosome.</text>
</comment>
<comment type="subunit">
    <text evidence="1">Part of the 50S ribosomal subunit.</text>
</comment>
<comment type="similarity">
    <text evidence="1">Belongs to the universal ribosomal protein uL22 family.</text>
</comment>
<proteinExistence type="inferred from homology"/>
<keyword id="KW-0687">Ribonucleoprotein</keyword>
<keyword id="KW-0689">Ribosomal protein</keyword>
<keyword id="KW-0694">RNA-binding</keyword>
<keyword id="KW-0699">rRNA-binding</keyword>